<sequence length="485" mass="55725">MIKKKNSPADKYLIKSQIGSGSYGNTFKVTHKESGQVFCKKSIQVNNQENIEKVLEEGKILTVMDHVNVVKLNDSFFENGNYVIIMEFAENGDLFQKIENQKRSGKPFSDFEIMHYFCQLVIALNYIHSQNIIHRDIKPKNIVLSSSDSGSGSGSGSGSSNDSIPLLKIADFGVSKLMSETDLYANTTAGTPQYVSYEICNKKPYTNKTDIWSLGVVLYELMTLSLPFDGRKETVMRNIQTESTIFKPVNHPNEELSSLLFKLLNKNPESRFSTQQILEQVFIREFIENHMVDFYKRFNFSIDGIFKVISKKLNLAGLNLTKEEKDNLEHKFIFTKMQEMKDRMKAFDTNHINKNQQQQSPQKLENNNNNNNDNNNNNNNNNNNNNNNNNNNNNNNNNNNNNNNNNNNNNNDKNNNINNNVNYNVLKKVSVELGFNLDNYCYDTDGMLIELVRSKLEGKDRKTYSKCYNYLSNKQSAFTNTNNEY</sequence>
<feature type="chain" id="PRO_0000362026" description="Probable serine/threonine-protein kinase nek1">
    <location>
        <begin position="1"/>
        <end position="485"/>
    </location>
</feature>
<feature type="domain" description="Protein kinase" evidence="1">
    <location>
        <begin position="12"/>
        <end position="283"/>
    </location>
</feature>
<feature type="region of interest" description="Disordered" evidence="3">
    <location>
        <begin position="354"/>
        <end position="419"/>
    </location>
</feature>
<feature type="compositionally biased region" description="Polar residues" evidence="3">
    <location>
        <begin position="354"/>
        <end position="365"/>
    </location>
</feature>
<feature type="compositionally biased region" description="Low complexity" evidence="3">
    <location>
        <begin position="366"/>
        <end position="419"/>
    </location>
</feature>
<feature type="active site" description="Proton acceptor" evidence="1 2">
    <location>
        <position position="136"/>
    </location>
</feature>
<feature type="binding site" evidence="1">
    <location>
        <begin position="18"/>
        <end position="26"/>
    </location>
    <ligand>
        <name>ATP</name>
        <dbReference type="ChEBI" id="CHEBI:30616"/>
    </ligand>
</feature>
<feature type="binding site" evidence="1">
    <location>
        <position position="41"/>
    </location>
    <ligand>
        <name>ATP</name>
        <dbReference type="ChEBI" id="CHEBI:30616"/>
    </ligand>
</feature>
<protein>
    <recommendedName>
        <fullName>Probable serine/threonine-protein kinase nek1</fullName>
        <ecNumber>2.7.11.1</ecNumber>
    </recommendedName>
    <alternativeName>
        <fullName>Never in mitosis protein A-related protein kinase 1</fullName>
    </alternativeName>
    <alternativeName>
        <fullName>NimA-related protein kinase 1</fullName>
    </alternativeName>
</protein>
<gene>
    <name type="primary">nek1</name>
    <name type="ORF">DDB_G0283927</name>
</gene>
<name>NEK1_DICDI</name>
<organism>
    <name type="scientific">Dictyostelium discoideum</name>
    <name type="common">Social amoeba</name>
    <dbReference type="NCBI Taxonomy" id="44689"/>
    <lineage>
        <taxon>Eukaryota</taxon>
        <taxon>Amoebozoa</taxon>
        <taxon>Evosea</taxon>
        <taxon>Eumycetozoa</taxon>
        <taxon>Dictyostelia</taxon>
        <taxon>Dictyosteliales</taxon>
        <taxon>Dictyosteliaceae</taxon>
        <taxon>Dictyostelium</taxon>
    </lineage>
</organism>
<keyword id="KW-0067">ATP-binding</keyword>
<keyword id="KW-0418">Kinase</keyword>
<keyword id="KW-0547">Nucleotide-binding</keyword>
<keyword id="KW-1185">Reference proteome</keyword>
<keyword id="KW-0723">Serine/threonine-protein kinase</keyword>
<keyword id="KW-0808">Transferase</keyword>
<accession>Q54QD5</accession>
<proteinExistence type="inferred from homology"/>
<dbReference type="EC" id="2.7.11.1"/>
<dbReference type="EMBL" id="AAFI02000058">
    <property type="protein sequence ID" value="EAL65451.1"/>
    <property type="molecule type" value="Genomic_DNA"/>
</dbReference>
<dbReference type="RefSeq" id="XP_638809.1">
    <property type="nucleotide sequence ID" value="XM_633717.1"/>
</dbReference>
<dbReference type="SMR" id="Q54QD5"/>
<dbReference type="STRING" id="44689.Q54QD5"/>
<dbReference type="PaxDb" id="44689-DDB0229345"/>
<dbReference type="EnsemblProtists" id="EAL65451">
    <property type="protein sequence ID" value="EAL65451"/>
    <property type="gene ID" value="DDB_G0283927"/>
</dbReference>
<dbReference type="GeneID" id="8624333"/>
<dbReference type="KEGG" id="ddi:DDB_G0283927"/>
<dbReference type="dictyBase" id="DDB_G0283927"/>
<dbReference type="VEuPathDB" id="AmoebaDB:DDB_G0283927"/>
<dbReference type="eggNOG" id="KOG0589">
    <property type="taxonomic scope" value="Eukaryota"/>
</dbReference>
<dbReference type="HOGENOM" id="CLU_563139_0_0_1"/>
<dbReference type="InParanoid" id="Q54QD5"/>
<dbReference type="OMA" id="FIENHMV"/>
<dbReference type="PhylomeDB" id="Q54QD5"/>
<dbReference type="PRO" id="PR:Q54QD5"/>
<dbReference type="Proteomes" id="UP000002195">
    <property type="component" value="Chromosome 4"/>
</dbReference>
<dbReference type="GO" id="GO:0005737">
    <property type="term" value="C:cytoplasm"/>
    <property type="evidence" value="ECO:0000318"/>
    <property type="project" value="GO_Central"/>
</dbReference>
<dbReference type="GO" id="GO:0005524">
    <property type="term" value="F:ATP binding"/>
    <property type="evidence" value="ECO:0007669"/>
    <property type="project" value="UniProtKB-KW"/>
</dbReference>
<dbReference type="GO" id="GO:0106310">
    <property type="term" value="F:protein serine kinase activity"/>
    <property type="evidence" value="ECO:0007669"/>
    <property type="project" value="RHEA"/>
</dbReference>
<dbReference type="GO" id="GO:0004674">
    <property type="term" value="F:protein serine/threonine kinase activity"/>
    <property type="evidence" value="ECO:0000318"/>
    <property type="project" value="GO_Central"/>
</dbReference>
<dbReference type="GO" id="GO:0006974">
    <property type="term" value="P:DNA damage response"/>
    <property type="evidence" value="ECO:0000318"/>
    <property type="project" value="GO_Central"/>
</dbReference>
<dbReference type="FunFam" id="1.10.510.10:FF:001112">
    <property type="entry name" value="Serine/threonine-protein kinase, putative"/>
    <property type="match status" value="1"/>
</dbReference>
<dbReference type="Gene3D" id="3.30.200.20">
    <property type="entry name" value="Phosphorylase Kinase, domain 1"/>
    <property type="match status" value="1"/>
</dbReference>
<dbReference type="Gene3D" id="1.10.510.10">
    <property type="entry name" value="Transferase(Phosphotransferase) domain 1"/>
    <property type="match status" value="1"/>
</dbReference>
<dbReference type="InterPro" id="IPR011009">
    <property type="entry name" value="Kinase-like_dom_sf"/>
</dbReference>
<dbReference type="InterPro" id="IPR051131">
    <property type="entry name" value="NEK_Ser/Thr_kinase_NIMA"/>
</dbReference>
<dbReference type="InterPro" id="IPR000719">
    <property type="entry name" value="Prot_kinase_dom"/>
</dbReference>
<dbReference type="InterPro" id="IPR008271">
    <property type="entry name" value="Ser/Thr_kinase_AS"/>
</dbReference>
<dbReference type="PANTHER" id="PTHR44899">
    <property type="entry name" value="CAMK FAMILY PROTEIN KINASE"/>
    <property type="match status" value="1"/>
</dbReference>
<dbReference type="PANTHER" id="PTHR44899:SF8">
    <property type="entry name" value="NIMA-RELATED KINASE 11"/>
    <property type="match status" value="1"/>
</dbReference>
<dbReference type="Pfam" id="PF00069">
    <property type="entry name" value="Pkinase"/>
    <property type="match status" value="1"/>
</dbReference>
<dbReference type="SMART" id="SM00220">
    <property type="entry name" value="S_TKc"/>
    <property type="match status" value="1"/>
</dbReference>
<dbReference type="SUPFAM" id="SSF56112">
    <property type="entry name" value="Protein kinase-like (PK-like)"/>
    <property type="match status" value="1"/>
</dbReference>
<dbReference type="PROSITE" id="PS50011">
    <property type="entry name" value="PROTEIN_KINASE_DOM"/>
    <property type="match status" value="1"/>
</dbReference>
<dbReference type="PROSITE" id="PS00108">
    <property type="entry name" value="PROTEIN_KINASE_ST"/>
    <property type="match status" value="1"/>
</dbReference>
<comment type="catalytic activity">
    <reaction>
        <text>L-seryl-[protein] + ATP = O-phospho-L-seryl-[protein] + ADP + H(+)</text>
        <dbReference type="Rhea" id="RHEA:17989"/>
        <dbReference type="Rhea" id="RHEA-COMP:9863"/>
        <dbReference type="Rhea" id="RHEA-COMP:11604"/>
        <dbReference type="ChEBI" id="CHEBI:15378"/>
        <dbReference type="ChEBI" id="CHEBI:29999"/>
        <dbReference type="ChEBI" id="CHEBI:30616"/>
        <dbReference type="ChEBI" id="CHEBI:83421"/>
        <dbReference type="ChEBI" id="CHEBI:456216"/>
        <dbReference type="EC" id="2.7.11.1"/>
    </reaction>
</comment>
<comment type="catalytic activity">
    <reaction>
        <text>L-threonyl-[protein] + ATP = O-phospho-L-threonyl-[protein] + ADP + H(+)</text>
        <dbReference type="Rhea" id="RHEA:46608"/>
        <dbReference type="Rhea" id="RHEA-COMP:11060"/>
        <dbReference type="Rhea" id="RHEA-COMP:11605"/>
        <dbReference type="ChEBI" id="CHEBI:15378"/>
        <dbReference type="ChEBI" id="CHEBI:30013"/>
        <dbReference type="ChEBI" id="CHEBI:30616"/>
        <dbReference type="ChEBI" id="CHEBI:61977"/>
        <dbReference type="ChEBI" id="CHEBI:456216"/>
        <dbReference type="EC" id="2.7.11.1"/>
    </reaction>
</comment>
<comment type="similarity">
    <text evidence="4">Belongs to the protein kinase superfamily. NEK Ser/Thr protein kinase family. NIMA subfamily.</text>
</comment>
<reference key="1">
    <citation type="journal article" date="2005" name="Nature">
        <title>The genome of the social amoeba Dictyostelium discoideum.</title>
        <authorList>
            <person name="Eichinger L."/>
            <person name="Pachebat J.A."/>
            <person name="Gloeckner G."/>
            <person name="Rajandream M.A."/>
            <person name="Sucgang R."/>
            <person name="Berriman M."/>
            <person name="Song J."/>
            <person name="Olsen R."/>
            <person name="Szafranski K."/>
            <person name="Xu Q."/>
            <person name="Tunggal B."/>
            <person name="Kummerfeld S."/>
            <person name="Madera M."/>
            <person name="Konfortov B.A."/>
            <person name="Rivero F."/>
            <person name="Bankier A.T."/>
            <person name="Lehmann R."/>
            <person name="Hamlin N."/>
            <person name="Davies R."/>
            <person name="Gaudet P."/>
            <person name="Fey P."/>
            <person name="Pilcher K."/>
            <person name="Chen G."/>
            <person name="Saunders D."/>
            <person name="Sodergren E.J."/>
            <person name="Davis P."/>
            <person name="Kerhornou A."/>
            <person name="Nie X."/>
            <person name="Hall N."/>
            <person name="Anjard C."/>
            <person name="Hemphill L."/>
            <person name="Bason N."/>
            <person name="Farbrother P."/>
            <person name="Desany B."/>
            <person name="Just E."/>
            <person name="Morio T."/>
            <person name="Rost R."/>
            <person name="Churcher C.M."/>
            <person name="Cooper J."/>
            <person name="Haydock S."/>
            <person name="van Driessche N."/>
            <person name="Cronin A."/>
            <person name="Goodhead I."/>
            <person name="Muzny D.M."/>
            <person name="Mourier T."/>
            <person name="Pain A."/>
            <person name="Lu M."/>
            <person name="Harper D."/>
            <person name="Lindsay R."/>
            <person name="Hauser H."/>
            <person name="James K.D."/>
            <person name="Quiles M."/>
            <person name="Madan Babu M."/>
            <person name="Saito T."/>
            <person name="Buchrieser C."/>
            <person name="Wardroper A."/>
            <person name="Felder M."/>
            <person name="Thangavelu M."/>
            <person name="Johnson D."/>
            <person name="Knights A."/>
            <person name="Loulseged H."/>
            <person name="Mungall K.L."/>
            <person name="Oliver K."/>
            <person name="Price C."/>
            <person name="Quail M.A."/>
            <person name="Urushihara H."/>
            <person name="Hernandez J."/>
            <person name="Rabbinowitsch E."/>
            <person name="Steffen D."/>
            <person name="Sanders M."/>
            <person name="Ma J."/>
            <person name="Kohara Y."/>
            <person name="Sharp S."/>
            <person name="Simmonds M.N."/>
            <person name="Spiegler S."/>
            <person name="Tivey A."/>
            <person name="Sugano S."/>
            <person name="White B."/>
            <person name="Walker D."/>
            <person name="Woodward J.R."/>
            <person name="Winckler T."/>
            <person name="Tanaka Y."/>
            <person name="Shaulsky G."/>
            <person name="Schleicher M."/>
            <person name="Weinstock G.M."/>
            <person name="Rosenthal A."/>
            <person name="Cox E.C."/>
            <person name="Chisholm R.L."/>
            <person name="Gibbs R.A."/>
            <person name="Loomis W.F."/>
            <person name="Platzer M."/>
            <person name="Kay R.R."/>
            <person name="Williams J.G."/>
            <person name="Dear P.H."/>
            <person name="Noegel A.A."/>
            <person name="Barrell B.G."/>
            <person name="Kuspa A."/>
        </authorList>
    </citation>
    <scope>NUCLEOTIDE SEQUENCE [LARGE SCALE GENOMIC DNA]</scope>
    <source>
        <strain>AX4</strain>
    </source>
</reference>
<evidence type="ECO:0000255" key="1">
    <source>
        <dbReference type="PROSITE-ProRule" id="PRU00159"/>
    </source>
</evidence>
<evidence type="ECO:0000255" key="2">
    <source>
        <dbReference type="PROSITE-ProRule" id="PRU10027"/>
    </source>
</evidence>
<evidence type="ECO:0000256" key="3">
    <source>
        <dbReference type="SAM" id="MobiDB-lite"/>
    </source>
</evidence>
<evidence type="ECO:0000305" key="4"/>